<evidence type="ECO:0000255" key="1">
    <source>
        <dbReference type="HAMAP-Rule" id="MF_00081"/>
    </source>
</evidence>
<gene>
    <name evidence="1" type="primary">hrcA</name>
    <name type="ordered locus">BCAH187_A4449</name>
</gene>
<sequence length="338" mass="37855">MLTERQLLILQTIIDDFIGSAQPVGSRTLAKKDEITFSSATIRNEMADLEELGFIEKTHSSSGRVPSEKGYRFYVDHLLAPQNLPNDEIVQIKDLFAERIFEAEKIAQQSAQILSELTNYTAIVLGPKLSTNKLKNVQIVPLDRQTAVAIIVTDTGHVQSKTITVPESVDLSDLEKMVNILNEKLSGVPMSELHNKIFKEIVTVLRGYVHNYDSAIKILDGTFQVPLSEKIYFGGKANMLSQPEFHDIQKVRSLLTMIDNEAEFYDILRHKQVGIQVKIGRENSATAMEDCSLISATYSIGEEQLGTIAILGPTRMQYSRVISLLQLFTRQITDGLKK</sequence>
<name>HRCA_BACC7</name>
<keyword id="KW-0678">Repressor</keyword>
<keyword id="KW-0346">Stress response</keyword>
<keyword id="KW-0804">Transcription</keyword>
<keyword id="KW-0805">Transcription regulation</keyword>
<protein>
    <recommendedName>
        <fullName evidence="1">Heat-inducible transcription repressor HrcA</fullName>
    </recommendedName>
</protein>
<organism>
    <name type="scientific">Bacillus cereus (strain AH187)</name>
    <dbReference type="NCBI Taxonomy" id="405534"/>
    <lineage>
        <taxon>Bacteria</taxon>
        <taxon>Bacillati</taxon>
        <taxon>Bacillota</taxon>
        <taxon>Bacilli</taxon>
        <taxon>Bacillales</taxon>
        <taxon>Bacillaceae</taxon>
        <taxon>Bacillus</taxon>
        <taxon>Bacillus cereus group</taxon>
    </lineage>
</organism>
<comment type="function">
    <text evidence="1">Negative regulator of class I heat shock genes (grpE-dnaK-dnaJ and groELS operons). Prevents heat-shock induction of these operons.</text>
</comment>
<comment type="similarity">
    <text evidence="1">Belongs to the HrcA family.</text>
</comment>
<dbReference type="EMBL" id="CP001177">
    <property type="protein sequence ID" value="ACJ77723.1"/>
    <property type="molecule type" value="Genomic_DNA"/>
</dbReference>
<dbReference type="SMR" id="B7HPL5"/>
<dbReference type="KEGG" id="bcr:BCAH187_A4449"/>
<dbReference type="HOGENOM" id="CLU_050019_1_0_9"/>
<dbReference type="Proteomes" id="UP000002214">
    <property type="component" value="Chromosome"/>
</dbReference>
<dbReference type="GO" id="GO:0003677">
    <property type="term" value="F:DNA binding"/>
    <property type="evidence" value="ECO:0007669"/>
    <property type="project" value="InterPro"/>
</dbReference>
<dbReference type="GO" id="GO:0045892">
    <property type="term" value="P:negative regulation of DNA-templated transcription"/>
    <property type="evidence" value="ECO:0007669"/>
    <property type="project" value="UniProtKB-UniRule"/>
</dbReference>
<dbReference type="FunFam" id="1.10.10.10:FF:000049">
    <property type="entry name" value="Heat-inducible transcription repressor HrcA"/>
    <property type="match status" value="1"/>
</dbReference>
<dbReference type="FunFam" id="3.30.390.60:FF:000001">
    <property type="entry name" value="Heat-inducible transcription repressor HrcA"/>
    <property type="match status" value="1"/>
</dbReference>
<dbReference type="Gene3D" id="3.30.450.40">
    <property type="match status" value="1"/>
</dbReference>
<dbReference type="Gene3D" id="3.30.390.60">
    <property type="entry name" value="Heat-inducible transcription repressor hrca homolog, domain 3"/>
    <property type="match status" value="1"/>
</dbReference>
<dbReference type="Gene3D" id="1.10.10.10">
    <property type="entry name" value="Winged helix-like DNA-binding domain superfamily/Winged helix DNA-binding domain"/>
    <property type="match status" value="1"/>
</dbReference>
<dbReference type="HAMAP" id="MF_00081">
    <property type="entry name" value="HrcA"/>
    <property type="match status" value="1"/>
</dbReference>
<dbReference type="InterPro" id="IPR029016">
    <property type="entry name" value="GAF-like_dom_sf"/>
</dbReference>
<dbReference type="InterPro" id="IPR002571">
    <property type="entry name" value="HrcA"/>
</dbReference>
<dbReference type="InterPro" id="IPR021153">
    <property type="entry name" value="HrcA_C"/>
</dbReference>
<dbReference type="InterPro" id="IPR036388">
    <property type="entry name" value="WH-like_DNA-bd_sf"/>
</dbReference>
<dbReference type="InterPro" id="IPR036390">
    <property type="entry name" value="WH_DNA-bd_sf"/>
</dbReference>
<dbReference type="InterPro" id="IPR023120">
    <property type="entry name" value="WHTH_transcript_rep_HrcA_IDD"/>
</dbReference>
<dbReference type="NCBIfam" id="TIGR00331">
    <property type="entry name" value="hrcA"/>
    <property type="match status" value="1"/>
</dbReference>
<dbReference type="PANTHER" id="PTHR34824">
    <property type="entry name" value="HEAT-INDUCIBLE TRANSCRIPTION REPRESSOR HRCA"/>
    <property type="match status" value="1"/>
</dbReference>
<dbReference type="PANTHER" id="PTHR34824:SF1">
    <property type="entry name" value="HEAT-INDUCIBLE TRANSCRIPTION REPRESSOR HRCA"/>
    <property type="match status" value="1"/>
</dbReference>
<dbReference type="Pfam" id="PF01628">
    <property type="entry name" value="HrcA"/>
    <property type="match status" value="1"/>
</dbReference>
<dbReference type="PIRSF" id="PIRSF005485">
    <property type="entry name" value="HrcA"/>
    <property type="match status" value="1"/>
</dbReference>
<dbReference type="SUPFAM" id="SSF55781">
    <property type="entry name" value="GAF domain-like"/>
    <property type="match status" value="1"/>
</dbReference>
<dbReference type="SUPFAM" id="SSF46785">
    <property type="entry name" value="Winged helix' DNA-binding domain"/>
    <property type="match status" value="1"/>
</dbReference>
<feature type="chain" id="PRO_1000117109" description="Heat-inducible transcription repressor HrcA">
    <location>
        <begin position="1"/>
        <end position="338"/>
    </location>
</feature>
<accession>B7HPL5</accession>
<reference key="1">
    <citation type="submission" date="2008-10" db="EMBL/GenBank/DDBJ databases">
        <title>Genome sequence of Bacillus cereus AH187.</title>
        <authorList>
            <person name="Dodson R.J."/>
            <person name="Durkin A.S."/>
            <person name="Rosovitz M.J."/>
            <person name="Rasko D.A."/>
            <person name="Kolsto A.B."/>
            <person name="Okstad O.A."/>
            <person name="Ravel J."/>
            <person name="Sutton G."/>
        </authorList>
    </citation>
    <scope>NUCLEOTIDE SEQUENCE [LARGE SCALE GENOMIC DNA]</scope>
    <source>
        <strain>AH187</strain>
    </source>
</reference>
<proteinExistence type="inferred from homology"/>